<gene>
    <name type="ordered locus">BCAH820_2657</name>
</gene>
<sequence length="182" mass="19208">MNKLSTKLVVAIGIGSALYGILGLWGFTIAPNTFIKPALAILTVFGALFGPVAGLLIGLIGHTVTDTIAGWGIWWGWVISSGIIGFTMGFIQKRVGFSVKNGTYNKGDISYLAITGLIGIVIAIIFAGAFDIIVMGEPFDKIVIQVLGATIADVIVFLVLGLPITIGLAKSNKKHTHLKIEK</sequence>
<feature type="chain" id="PRO_1000200758" description="UPF0397 protein BCAH820_2657">
    <location>
        <begin position="1"/>
        <end position="182"/>
    </location>
</feature>
<feature type="transmembrane region" description="Helical" evidence="1">
    <location>
        <begin position="9"/>
        <end position="29"/>
    </location>
</feature>
<feature type="transmembrane region" description="Helical" evidence="1">
    <location>
        <begin position="40"/>
        <end position="60"/>
    </location>
</feature>
<feature type="transmembrane region" description="Helical" evidence="1">
    <location>
        <begin position="71"/>
        <end position="91"/>
    </location>
</feature>
<feature type="transmembrane region" description="Helical" evidence="1">
    <location>
        <begin position="114"/>
        <end position="134"/>
    </location>
</feature>
<feature type="transmembrane region" description="Helical" evidence="1">
    <location>
        <begin position="142"/>
        <end position="162"/>
    </location>
</feature>
<organism>
    <name type="scientific">Bacillus cereus (strain AH820)</name>
    <dbReference type="NCBI Taxonomy" id="405535"/>
    <lineage>
        <taxon>Bacteria</taxon>
        <taxon>Bacillati</taxon>
        <taxon>Bacillota</taxon>
        <taxon>Bacilli</taxon>
        <taxon>Bacillales</taxon>
        <taxon>Bacillaceae</taxon>
        <taxon>Bacillus</taxon>
        <taxon>Bacillus cereus group</taxon>
    </lineage>
</organism>
<keyword id="KW-1003">Cell membrane</keyword>
<keyword id="KW-0472">Membrane</keyword>
<keyword id="KW-0812">Transmembrane</keyword>
<keyword id="KW-1133">Transmembrane helix</keyword>
<comment type="subcellular location">
    <subcellularLocation>
        <location evidence="1">Cell membrane</location>
        <topology evidence="1">Multi-pass membrane protein</topology>
    </subcellularLocation>
</comment>
<comment type="similarity">
    <text evidence="1">Belongs to the UPF0397 family.</text>
</comment>
<proteinExistence type="inferred from homology"/>
<accession>B7JQN4</accession>
<dbReference type="EMBL" id="CP001283">
    <property type="protein sequence ID" value="ACK89888.1"/>
    <property type="molecule type" value="Genomic_DNA"/>
</dbReference>
<dbReference type="RefSeq" id="WP_001038224.1">
    <property type="nucleotide sequence ID" value="NC_011773.1"/>
</dbReference>
<dbReference type="SMR" id="B7JQN4"/>
<dbReference type="KEGG" id="bcu:BCAH820_2657"/>
<dbReference type="HOGENOM" id="CLU_120023_0_0_9"/>
<dbReference type="Proteomes" id="UP000001363">
    <property type="component" value="Chromosome"/>
</dbReference>
<dbReference type="GO" id="GO:0005886">
    <property type="term" value="C:plasma membrane"/>
    <property type="evidence" value="ECO:0007669"/>
    <property type="project" value="UniProtKB-SubCell"/>
</dbReference>
<dbReference type="Gene3D" id="1.10.1760.20">
    <property type="match status" value="1"/>
</dbReference>
<dbReference type="HAMAP" id="MF_01572">
    <property type="entry name" value="UPF0397"/>
    <property type="match status" value="1"/>
</dbReference>
<dbReference type="InterPro" id="IPR009825">
    <property type="entry name" value="ECF_substrate-spec-like"/>
</dbReference>
<dbReference type="InterPro" id="IPR022914">
    <property type="entry name" value="UPF0397"/>
</dbReference>
<dbReference type="NCBIfam" id="NF010182">
    <property type="entry name" value="PRK13661.1"/>
    <property type="match status" value="1"/>
</dbReference>
<dbReference type="PANTHER" id="PTHR37815">
    <property type="entry name" value="UPF0397 PROTEIN BC_2624-RELATED"/>
    <property type="match status" value="1"/>
</dbReference>
<dbReference type="PANTHER" id="PTHR37815:SF3">
    <property type="entry name" value="UPF0397 PROTEIN SPR0429"/>
    <property type="match status" value="1"/>
</dbReference>
<dbReference type="Pfam" id="PF07155">
    <property type="entry name" value="ECF-ribofla_trS"/>
    <property type="match status" value="1"/>
</dbReference>
<reference key="1">
    <citation type="submission" date="2008-10" db="EMBL/GenBank/DDBJ databases">
        <title>Genome sequence of Bacillus cereus AH820.</title>
        <authorList>
            <person name="Dodson R.J."/>
            <person name="Durkin A.S."/>
            <person name="Rosovitz M.J."/>
            <person name="Rasko D.A."/>
            <person name="Hoffmaster A."/>
            <person name="Ravel J."/>
            <person name="Sutton G."/>
        </authorList>
    </citation>
    <scope>NUCLEOTIDE SEQUENCE [LARGE SCALE GENOMIC DNA]</scope>
    <source>
        <strain>AH820</strain>
    </source>
</reference>
<name>Y2657_BACC0</name>
<evidence type="ECO:0000255" key="1">
    <source>
        <dbReference type="HAMAP-Rule" id="MF_01572"/>
    </source>
</evidence>
<protein>
    <recommendedName>
        <fullName evidence="1">UPF0397 protein BCAH820_2657</fullName>
    </recommendedName>
</protein>